<organism>
    <name type="scientific">Pan troglodytes</name>
    <name type="common">Chimpanzee</name>
    <dbReference type="NCBI Taxonomy" id="9598"/>
    <lineage>
        <taxon>Eukaryota</taxon>
        <taxon>Metazoa</taxon>
        <taxon>Chordata</taxon>
        <taxon>Craniata</taxon>
        <taxon>Vertebrata</taxon>
        <taxon>Euteleostomi</taxon>
        <taxon>Mammalia</taxon>
        <taxon>Eutheria</taxon>
        <taxon>Euarchontoglires</taxon>
        <taxon>Primates</taxon>
        <taxon>Haplorrhini</taxon>
        <taxon>Catarrhini</taxon>
        <taxon>Hominidae</taxon>
        <taxon>Pan</taxon>
    </lineage>
</organism>
<comment type="function">
    <text evidence="2">Olfactory receptor specific for trace amines, such as beta-phenylethylamine (beta-PEA). Trace amine compounds are enriched in animal body fluids and act on trace amine-associated receptors (TAARs) to elicit both intraspecific and interspecific innate behaviors. Beta-PEA-binding causes a conformation change that triggers signaling via G(s)-class of G alpha proteins (GNAL or GNAS).</text>
</comment>
<comment type="subcellular location">
    <subcellularLocation>
        <location evidence="3">Cell membrane</location>
        <topology evidence="4">Multi-pass membrane protein</topology>
    </subcellularLocation>
</comment>
<comment type="domain">
    <text evidence="1">In addition to the well known disulfide bond common to G-protein coupled receptor 1 family, trace amine-associated receptors (TAARs) contain an unique disulfide bond (Cys-22-Cys-186) connecting the N-terminus to the extracellular Loop 2 (ECL2), which is required for agonist-induced receptor activation.</text>
</comment>
<comment type="similarity">
    <text evidence="5">Belongs to the G-protein coupled receptor 1 family.</text>
</comment>
<protein>
    <recommendedName>
        <fullName>Trace amine-associated receptor 6</fullName>
        <shortName>TaR-6</shortName>
        <shortName>Trace amine receptor 6</shortName>
    </recommendedName>
    <alternativeName>
        <fullName>Trace amine receptor 4</fullName>
        <shortName>TaR-4</shortName>
    </alternativeName>
</protein>
<proteinExistence type="inferred from homology"/>
<gene>
    <name type="primary">TAAR6</name>
    <name type="synonym">TRAR4</name>
</gene>
<keyword id="KW-1003">Cell membrane</keyword>
<keyword id="KW-1015">Disulfide bond</keyword>
<keyword id="KW-0297">G-protein coupled receptor</keyword>
<keyword id="KW-0325">Glycoprotein</keyword>
<keyword id="KW-0472">Membrane</keyword>
<keyword id="KW-0675">Receptor</keyword>
<keyword id="KW-1185">Reference proteome</keyword>
<keyword id="KW-0807">Transducer</keyword>
<keyword id="KW-0812">Transmembrane</keyword>
<keyword id="KW-1133">Transmembrane helix</keyword>
<name>TAAR6_PANTR</name>
<accession>Q5W8W0</accession>
<sequence length="345" mass="38526">MSSNSSLLVAVQLCYPNVNGSCVETLYSPGSRVILYIVFGFGAVLAVFGNLLVMISILHFKQLHSPTNFLVASLACADFLVGVTVMPFSMVRTVESCWYFGRSFCTFHTCCDVAFCYSSLFHLCFISIDRYIAVTDPLVYPTKFTVSVSGICISVSWILPLMYSGAVFYTGVYDDGLEELSDALNCIGGCQTVVNQNWVLIDCLSFFIPTFIMIILYGNIFLVARRQAKKIENTGSKTESSSESYKARVARRERKAAKTLGVTVVAFMISWLPYSIDSLIDAFMGFITPAYIYEICCWCAYYNSAMNPLIYALFYPWFRKAIKVIVTGQVLKNSSATMNLFSEHI</sequence>
<reference key="1">
    <citation type="journal article" date="2004" name="Am. J. Hum. Genet.">
        <title>Polymorphisms in the trace amine receptor 4 (TRAR4) gene on chromosome 6q23.2 are associated with susceptibility to schizophrenia.</title>
        <authorList>
            <person name="Duan J."/>
            <person name="Martinez M."/>
            <person name="Sanders A.R."/>
            <person name="Hou C."/>
            <person name="Saitou N."/>
            <person name="Kitano T."/>
            <person name="Mowry B.J."/>
            <person name="Crowe R.R."/>
            <person name="Silverman J.M."/>
            <person name="Levinson D.F."/>
            <person name="Gejman P.V."/>
        </authorList>
    </citation>
    <scope>NUCLEOTIDE SEQUENCE [GENOMIC DNA]</scope>
    <source>
        <strain>Isolate S109</strain>
        <strain>Isolate S286</strain>
    </source>
</reference>
<reference key="2">
    <citation type="journal article" date="2005" name="Genomics">
        <title>Trace amine-associated receptors form structurally and functionally distinct subfamilies of novel G protein-coupled receptors.</title>
        <authorList>
            <person name="Lindemann L."/>
            <person name="Ebeling M."/>
            <person name="Kratochwil N.A."/>
            <person name="Bunzow J.R."/>
            <person name="Grandy D.K."/>
            <person name="Hoener M.C."/>
        </authorList>
    </citation>
    <scope>NUCLEOTIDE SEQUENCE [GENOMIC DNA]</scope>
</reference>
<evidence type="ECO:0000250" key="1">
    <source>
        <dbReference type="UniProtKB" id="Q5QD04"/>
    </source>
</evidence>
<evidence type="ECO:0000250" key="2">
    <source>
        <dbReference type="UniProtKB" id="Q5QD13"/>
    </source>
</evidence>
<evidence type="ECO:0000250" key="3">
    <source>
        <dbReference type="UniProtKB" id="Q96RI8"/>
    </source>
</evidence>
<evidence type="ECO:0000255" key="4"/>
<evidence type="ECO:0000255" key="5">
    <source>
        <dbReference type="PROSITE-ProRule" id="PRU00521"/>
    </source>
</evidence>
<feature type="chain" id="PRO_0000070160" description="Trace amine-associated receptor 6">
    <location>
        <begin position="1"/>
        <end position="345"/>
    </location>
</feature>
<feature type="topological domain" description="Extracellular" evidence="4">
    <location>
        <begin position="1"/>
        <end position="32"/>
    </location>
</feature>
<feature type="transmembrane region" description="Helical; Name=1" evidence="4">
    <location>
        <begin position="33"/>
        <end position="53"/>
    </location>
</feature>
<feature type="topological domain" description="Cytoplasmic" evidence="4">
    <location>
        <begin position="54"/>
        <end position="68"/>
    </location>
</feature>
<feature type="transmembrane region" description="Helical; Name=2" evidence="4">
    <location>
        <begin position="69"/>
        <end position="89"/>
    </location>
</feature>
<feature type="topological domain" description="Extracellular" evidence="4">
    <location>
        <begin position="90"/>
        <end position="107"/>
    </location>
</feature>
<feature type="transmembrane region" description="Helical; Name=3" evidence="4">
    <location>
        <begin position="108"/>
        <end position="128"/>
    </location>
</feature>
<feature type="topological domain" description="Cytoplasmic" evidence="4">
    <location>
        <begin position="129"/>
        <end position="147"/>
    </location>
</feature>
<feature type="transmembrane region" description="Helical; Name=4" evidence="4">
    <location>
        <begin position="148"/>
        <end position="168"/>
    </location>
</feature>
<feature type="topological domain" description="Extracellular" evidence="4">
    <location>
        <begin position="169"/>
        <end position="202"/>
    </location>
</feature>
<feature type="transmembrane region" description="Helical; Name=5" evidence="4">
    <location>
        <begin position="203"/>
        <end position="223"/>
    </location>
</feature>
<feature type="topological domain" description="Cytoplasmic" evidence="4">
    <location>
        <begin position="224"/>
        <end position="259"/>
    </location>
</feature>
<feature type="transmembrane region" description="Helical; Name=6" evidence="4">
    <location>
        <begin position="260"/>
        <end position="276"/>
    </location>
</feature>
<feature type="topological domain" description="Extracellular" evidence="4">
    <location>
        <begin position="277"/>
        <end position="282"/>
    </location>
</feature>
<feature type="transmembrane region" description="Helical; Name=7" evidence="4">
    <location>
        <begin position="283"/>
        <end position="302"/>
    </location>
</feature>
<feature type="topological domain" description="Cytoplasmic" evidence="4">
    <location>
        <begin position="303"/>
        <end position="345"/>
    </location>
</feature>
<feature type="glycosylation site" description="N-linked (GlcNAc...) asparagine" evidence="4">
    <location>
        <position position="4"/>
    </location>
</feature>
<feature type="glycosylation site" description="N-linked (GlcNAc...) asparagine" evidence="4">
    <location>
        <position position="19"/>
    </location>
</feature>
<feature type="disulfide bond" evidence="1">
    <location>
        <begin position="22"/>
        <end position="186"/>
    </location>
</feature>
<feature type="disulfide bond" evidence="5">
    <location>
        <begin position="105"/>
        <end position="190"/>
    </location>
</feature>
<dbReference type="EMBL" id="AB180398">
    <property type="protein sequence ID" value="BAD67188.1"/>
    <property type="molecule type" value="Genomic_DNA"/>
</dbReference>
<dbReference type="EMBL" id="AB180397">
    <property type="protein sequence ID" value="BAD67187.1"/>
    <property type="molecule type" value="Genomic_DNA"/>
</dbReference>
<dbReference type="EMBL" id="AY702312">
    <property type="protein sequence ID" value="AAV70126.1"/>
    <property type="molecule type" value="Genomic_DNA"/>
</dbReference>
<dbReference type="RefSeq" id="NP_001009125.1">
    <property type="nucleotide sequence ID" value="NM_001009125.1"/>
</dbReference>
<dbReference type="SMR" id="Q5W8W0"/>
<dbReference type="FunCoup" id="Q5W8W0">
    <property type="interactions" value="402"/>
</dbReference>
<dbReference type="STRING" id="9598.ENSPTRP00000088090"/>
<dbReference type="GlyCosmos" id="Q5W8W0">
    <property type="glycosylation" value="2 sites, No reported glycans"/>
</dbReference>
<dbReference type="Ensembl" id="ENSPTRT00000034366.3">
    <property type="protein sequence ID" value="ENSPTRP00000088090.1"/>
    <property type="gene ID" value="ENSPTRG00000018609.3"/>
</dbReference>
<dbReference type="GeneID" id="472127"/>
<dbReference type="KEGG" id="ptr:472127"/>
<dbReference type="CTD" id="319100"/>
<dbReference type="GeneTree" id="ENSGT00940000160008"/>
<dbReference type="InParanoid" id="Q5W8W0"/>
<dbReference type="OMA" id="MIILYGN"/>
<dbReference type="OrthoDB" id="8486at9604"/>
<dbReference type="Proteomes" id="UP000002277">
    <property type="component" value="Chromosome 6"/>
</dbReference>
<dbReference type="Bgee" id="ENSPTRG00000018609">
    <property type="expression patterns" value="Expressed in skeletal muscle tissue and 1 other cell type or tissue"/>
</dbReference>
<dbReference type="GO" id="GO:0005886">
    <property type="term" value="C:plasma membrane"/>
    <property type="evidence" value="ECO:0000250"/>
    <property type="project" value="UniProtKB"/>
</dbReference>
<dbReference type="GO" id="GO:0001594">
    <property type="term" value="F:trace-amine receptor activity"/>
    <property type="evidence" value="ECO:0000250"/>
    <property type="project" value="UniProtKB"/>
</dbReference>
<dbReference type="GO" id="GO:0007189">
    <property type="term" value="P:adenylate cyclase-activating G protein-coupled receptor signaling pathway"/>
    <property type="evidence" value="ECO:0000250"/>
    <property type="project" value="UniProtKB"/>
</dbReference>
<dbReference type="GO" id="GO:0007186">
    <property type="term" value="P:G protein-coupled receptor signaling pathway"/>
    <property type="evidence" value="ECO:0000318"/>
    <property type="project" value="GO_Central"/>
</dbReference>
<dbReference type="CDD" id="cd15316">
    <property type="entry name" value="7tmA_TAAR6_8_9"/>
    <property type="match status" value="1"/>
</dbReference>
<dbReference type="FunFam" id="1.20.1070.10:FF:000030">
    <property type="entry name" value="trace amine-associated receptor 1"/>
    <property type="match status" value="1"/>
</dbReference>
<dbReference type="Gene3D" id="1.20.1070.10">
    <property type="entry name" value="Rhodopsin 7-helix transmembrane proteins"/>
    <property type="match status" value="1"/>
</dbReference>
<dbReference type="InterPro" id="IPR000276">
    <property type="entry name" value="GPCR_Rhodpsn"/>
</dbReference>
<dbReference type="InterPro" id="IPR017452">
    <property type="entry name" value="GPCR_Rhodpsn_7TM"/>
</dbReference>
<dbReference type="InterPro" id="IPR050569">
    <property type="entry name" value="TAAR"/>
</dbReference>
<dbReference type="InterPro" id="IPR009132">
    <property type="entry name" value="TAAR_fam"/>
</dbReference>
<dbReference type="PANTHER" id="PTHR24249">
    <property type="entry name" value="HISTAMINE RECEPTOR-RELATED G-PROTEIN COUPLED RECEPTOR"/>
    <property type="match status" value="1"/>
</dbReference>
<dbReference type="PANTHER" id="PTHR24249:SF271">
    <property type="entry name" value="TRACE AMINE-ASSOCIATED RECEPTOR 6"/>
    <property type="match status" value="1"/>
</dbReference>
<dbReference type="Pfam" id="PF00001">
    <property type="entry name" value="7tm_1"/>
    <property type="match status" value="1"/>
</dbReference>
<dbReference type="PRINTS" id="PR00237">
    <property type="entry name" value="GPCRRHODOPSN"/>
</dbReference>
<dbReference type="PRINTS" id="PR01830">
    <property type="entry name" value="TRACEAMINER"/>
</dbReference>
<dbReference type="SMART" id="SM01381">
    <property type="entry name" value="7TM_GPCR_Srsx"/>
    <property type="match status" value="1"/>
</dbReference>
<dbReference type="SUPFAM" id="SSF81321">
    <property type="entry name" value="Family A G protein-coupled receptor-like"/>
    <property type="match status" value="1"/>
</dbReference>
<dbReference type="PROSITE" id="PS00237">
    <property type="entry name" value="G_PROTEIN_RECEP_F1_1"/>
    <property type="match status" value="1"/>
</dbReference>
<dbReference type="PROSITE" id="PS50262">
    <property type="entry name" value="G_PROTEIN_RECEP_F1_2"/>
    <property type="match status" value="1"/>
</dbReference>